<protein>
    <recommendedName>
        <fullName evidence="1">4-hydroxy-3-methylbut-2-enyl diphosphate reductase</fullName>
        <shortName evidence="1">HMBPP reductase</shortName>
        <ecNumber evidence="1">1.17.7.4</ecNumber>
    </recommendedName>
</protein>
<proteinExistence type="inferred from homology"/>
<reference key="1">
    <citation type="journal article" date="2005" name="Proc. Natl. Acad. Sci. U.S.A.">
        <title>Complete genome sequencing of Anaplasma marginale reveals that the surface is skewed to two superfamilies of outer membrane proteins.</title>
        <authorList>
            <person name="Brayton K.A."/>
            <person name="Kappmeyer L.S."/>
            <person name="Herndon D.R."/>
            <person name="Dark M.J."/>
            <person name="Tibbals D.L."/>
            <person name="Palmer G.H."/>
            <person name="McGuire T.C."/>
            <person name="Knowles D.P. Jr."/>
        </authorList>
    </citation>
    <scope>NUCLEOTIDE SEQUENCE [LARGE SCALE GENOMIC DNA]</scope>
    <source>
        <strain>St. Maries</strain>
    </source>
</reference>
<sequence>MEAVQQNHSVCRGYCGVMLRSRSGGFFRRGFMLGNVEVILARPRGFCAGVERAVRTLESVASRYAGTREVYALHEIVHNLHVVNSFKKMGVKFVSALHEVPEGAVLVFSAHGVSQQVKEESRRKGLTVVDATCPLVTKVHLEIQRYDKSGYQVILVGHKGHREVEGSMGQVSNPVVLVQNVQDVQSIKIPSAAKLAYVTQTTLSMDDTAEIISALKLRFPRIVGPDLRDICYATQNRQTAVKAMSQMVDVVLAIGSKNSSNSNRLLDLAKAQNARAYLIDSYRNIDLEWLIGARRIGITAGASAPEILVQEVIDYLGLHANLKVRTMDGVSENITFKLPELD</sequence>
<keyword id="KW-0004">4Fe-4S</keyword>
<keyword id="KW-0408">Iron</keyword>
<keyword id="KW-0411">Iron-sulfur</keyword>
<keyword id="KW-0414">Isoprene biosynthesis</keyword>
<keyword id="KW-0479">Metal-binding</keyword>
<keyword id="KW-0560">Oxidoreductase</keyword>
<name>ISPH_ANAMM</name>
<gene>
    <name evidence="1" type="primary">ispH</name>
    <name type="synonym">lytB</name>
    <name type="ordered locus">AM804</name>
</gene>
<comment type="function">
    <text evidence="1">Catalyzes the conversion of 1-hydroxy-2-methyl-2-(E)-butenyl 4-diphosphate (HMBPP) into a mixture of isopentenyl diphosphate (IPP) and dimethylallyl diphosphate (DMAPP). Acts in the terminal step of the DOXP/MEP pathway for isoprenoid precursor biosynthesis.</text>
</comment>
<comment type="catalytic activity">
    <reaction evidence="1">
        <text>isopentenyl diphosphate + 2 oxidized [2Fe-2S]-[ferredoxin] + H2O = (2E)-4-hydroxy-3-methylbut-2-enyl diphosphate + 2 reduced [2Fe-2S]-[ferredoxin] + 2 H(+)</text>
        <dbReference type="Rhea" id="RHEA:24488"/>
        <dbReference type="Rhea" id="RHEA-COMP:10000"/>
        <dbReference type="Rhea" id="RHEA-COMP:10001"/>
        <dbReference type="ChEBI" id="CHEBI:15377"/>
        <dbReference type="ChEBI" id="CHEBI:15378"/>
        <dbReference type="ChEBI" id="CHEBI:33737"/>
        <dbReference type="ChEBI" id="CHEBI:33738"/>
        <dbReference type="ChEBI" id="CHEBI:128753"/>
        <dbReference type="ChEBI" id="CHEBI:128769"/>
        <dbReference type="EC" id="1.17.7.4"/>
    </reaction>
</comment>
<comment type="catalytic activity">
    <reaction evidence="1">
        <text>dimethylallyl diphosphate + 2 oxidized [2Fe-2S]-[ferredoxin] + H2O = (2E)-4-hydroxy-3-methylbut-2-enyl diphosphate + 2 reduced [2Fe-2S]-[ferredoxin] + 2 H(+)</text>
        <dbReference type="Rhea" id="RHEA:24825"/>
        <dbReference type="Rhea" id="RHEA-COMP:10000"/>
        <dbReference type="Rhea" id="RHEA-COMP:10001"/>
        <dbReference type="ChEBI" id="CHEBI:15377"/>
        <dbReference type="ChEBI" id="CHEBI:15378"/>
        <dbReference type="ChEBI" id="CHEBI:33737"/>
        <dbReference type="ChEBI" id="CHEBI:33738"/>
        <dbReference type="ChEBI" id="CHEBI:57623"/>
        <dbReference type="ChEBI" id="CHEBI:128753"/>
        <dbReference type="EC" id="1.17.7.4"/>
    </reaction>
</comment>
<comment type="cofactor">
    <cofactor evidence="1">
        <name>[4Fe-4S] cluster</name>
        <dbReference type="ChEBI" id="CHEBI:49883"/>
    </cofactor>
    <text evidence="1">Binds 1 [4Fe-4S] cluster per subunit.</text>
</comment>
<comment type="pathway">
    <text evidence="1">Isoprenoid biosynthesis; dimethylallyl diphosphate biosynthesis; dimethylallyl diphosphate from (2E)-4-hydroxy-3-methylbutenyl diphosphate: step 1/1.</text>
</comment>
<comment type="pathway">
    <text evidence="1">Isoprenoid biosynthesis; isopentenyl diphosphate biosynthesis via DXP pathway; isopentenyl diphosphate from 1-deoxy-D-xylulose 5-phosphate: step 6/6.</text>
</comment>
<comment type="similarity">
    <text evidence="1">Belongs to the IspH family.</text>
</comment>
<organism>
    <name type="scientific">Anaplasma marginale (strain St. Maries)</name>
    <dbReference type="NCBI Taxonomy" id="234826"/>
    <lineage>
        <taxon>Bacteria</taxon>
        <taxon>Pseudomonadati</taxon>
        <taxon>Pseudomonadota</taxon>
        <taxon>Alphaproteobacteria</taxon>
        <taxon>Rickettsiales</taxon>
        <taxon>Anaplasmataceae</taxon>
        <taxon>Anaplasma</taxon>
    </lineage>
</organism>
<accession>Q5PAE7</accession>
<dbReference type="EC" id="1.17.7.4" evidence="1"/>
<dbReference type="EMBL" id="CP000030">
    <property type="protein sequence ID" value="AAV86733.1"/>
    <property type="molecule type" value="Genomic_DNA"/>
</dbReference>
<dbReference type="SMR" id="Q5PAE7"/>
<dbReference type="KEGG" id="ama:AM804"/>
<dbReference type="HOGENOM" id="CLU_027486_1_0_5"/>
<dbReference type="UniPathway" id="UPA00056">
    <property type="reaction ID" value="UER00097"/>
</dbReference>
<dbReference type="UniPathway" id="UPA00059">
    <property type="reaction ID" value="UER00105"/>
</dbReference>
<dbReference type="GO" id="GO:0051539">
    <property type="term" value="F:4 iron, 4 sulfur cluster binding"/>
    <property type="evidence" value="ECO:0007669"/>
    <property type="project" value="UniProtKB-UniRule"/>
</dbReference>
<dbReference type="GO" id="GO:0051745">
    <property type="term" value="F:4-hydroxy-3-methylbut-2-enyl diphosphate reductase activity"/>
    <property type="evidence" value="ECO:0007669"/>
    <property type="project" value="UniProtKB-UniRule"/>
</dbReference>
<dbReference type="GO" id="GO:0046872">
    <property type="term" value="F:metal ion binding"/>
    <property type="evidence" value="ECO:0007669"/>
    <property type="project" value="UniProtKB-KW"/>
</dbReference>
<dbReference type="GO" id="GO:0050992">
    <property type="term" value="P:dimethylallyl diphosphate biosynthetic process"/>
    <property type="evidence" value="ECO:0007669"/>
    <property type="project" value="UniProtKB-UniRule"/>
</dbReference>
<dbReference type="GO" id="GO:0019288">
    <property type="term" value="P:isopentenyl diphosphate biosynthetic process, methylerythritol 4-phosphate pathway"/>
    <property type="evidence" value="ECO:0007669"/>
    <property type="project" value="UniProtKB-UniRule"/>
</dbReference>
<dbReference type="GO" id="GO:0016114">
    <property type="term" value="P:terpenoid biosynthetic process"/>
    <property type="evidence" value="ECO:0007669"/>
    <property type="project" value="UniProtKB-UniRule"/>
</dbReference>
<dbReference type="CDD" id="cd13944">
    <property type="entry name" value="lytB_ispH"/>
    <property type="match status" value="1"/>
</dbReference>
<dbReference type="Gene3D" id="3.40.50.11270">
    <property type="match status" value="1"/>
</dbReference>
<dbReference type="Gene3D" id="3.40.1010.20">
    <property type="entry name" value="4-hydroxy-3-methylbut-2-enyl diphosphate reductase, catalytic domain"/>
    <property type="match status" value="2"/>
</dbReference>
<dbReference type="HAMAP" id="MF_00191">
    <property type="entry name" value="IspH"/>
    <property type="match status" value="1"/>
</dbReference>
<dbReference type="InterPro" id="IPR003451">
    <property type="entry name" value="LytB/IspH"/>
</dbReference>
<dbReference type="NCBIfam" id="TIGR00216">
    <property type="entry name" value="ispH_lytB"/>
    <property type="match status" value="1"/>
</dbReference>
<dbReference type="NCBIfam" id="NF002188">
    <property type="entry name" value="PRK01045.1-2"/>
    <property type="match status" value="1"/>
</dbReference>
<dbReference type="NCBIfam" id="NF002190">
    <property type="entry name" value="PRK01045.1-4"/>
    <property type="match status" value="1"/>
</dbReference>
<dbReference type="PANTHER" id="PTHR30426">
    <property type="entry name" value="4-HYDROXY-3-METHYLBUT-2-ENYL DIPHOSPHATE REDUCTASE"/>
    <property type="match status" value="1"/>
</dbReference>
<dbReference type="PANTHER" id="PTHR30426:SF0">
    <property type="entry name" value="4-HYDROXY-3-METHYLBUT-2-ENYL DIPHOSPHATE REDUCTASE"/>
    <property type="match status" value="1"/>
</dbReference>
<dbReference type="Pfam" id="PF02401">
    <property type="entry name" value="LYTB"/>
    <property type="match status" value="1"/>
</dbReference>
<feature type="chain" id="PRO_0000128764" description="4-hydroxy-3-methylbut-2-enyl diphosphate reductase">
    <location>
        <begin position="1"/>
        <end position="342"/>
    </location>
</feature>
<feature type="active site" description="Proton donor" evidence="1">
    <location>
        <position position="163"/>
    </location>
</feature>
<feature type="binding site" evidence="1">
    <location>
        <position position="47"/>
    </location>
    <ligand>
        <name>[4Fe-4S] cluster</name>
        <dbReference type="ChEBI" id="CHEBI:49883"/>
    </ligand>
</feature>
<feature type="binding site" evidence="1">
    <location>
        <position position="78"/>
    </location>
    <ligand>
        <name>(2E)-4-hydroxy-3-methylbut-2-enyl diphosphate</name>
        <dbReference type="ChEBI" id="CHEBI:128753"/>
    </ligand>
</feature>
<feature type="binding site" evidence="1">
    <location>
        <position position="78"/>
    </location>
    <ligand>
        <name>dimethylallyl diphosphate</name>
        <dbReference type="ChEBI" id="CHEBI:57623"/>
    </ligand>
</feature>
<feature type="binding site" evidence="1">
    <location>
        <position position="78"/>
    </location>
    <ligand>
        <name>isopentenyl diphosphate</name>
        <dbReference type="ChEBI" id="CHEBI:128769"/>
    </ligand>
</feature>
<feature type="binding site" evidence="1">
    <location>
        <position position="111"/>
    </location>
    <ligand>
        <name>(2E)-4-hydroxy-3-methylbut-2-enyl diphosphate</name>
        <dbReference type="ChEBI" id="CHEBI:128753"/>
    </ligand>
</feature>
<feature type="binding site" evidence="1">
    <location>
        <position position="111"/>
    </location>
    <ligand>
        <name>dimethylallyl diphosphate</name>
        <dbReference type="ChEBI" id="CHEBI:57623"/>
    </ligand>
</feature>
<feature type="binding site" evidence="1">
    <location>
        <position position="111"/>
    </location>
    <ligand>
        <name>isopentenyl diphosphate</name>
        <dbReference type="ChEBI" id="CHEBI:128769"/>
    </ligand>
</feature>
<feature type="binding site" evidence="1">
    <location>
        <position position="133"/>
    </location>
    <ligand>
        <name>[4Fe-4S] cluster</name>
        <dbReference type="ChEBI" id="CHEBI:49883"/>
    </ligand>
</feature>
<feature type="binding site" evidence="1">
    <location>
        <position position="161"/>
    </location>
    <ligand>
        <name>(2E)-4-hydroxy-3-methylbut-2-enyl diphosphate</name>
        <dbReference type="ChEBI" id="CHEBI:128753"/>
    </ligand>
</feature>
<feature type="binding site" evidence="1">
    <location>
        <position position="161"/>
    </location>
    <ligand>
        <name>dimethylallyl diphosphate</name>
        <dbReference type="ChEBI" id="CHEBI:57623"/>
    </ligand>
</feature>
<feature type="binding site" evidence="1">
    <location>
        <position position="161"/>
    </location>
    <ligand>
        <name>isopentenyl diphosphate</name>
        <dbReference type="ChEBI" id="CHEBI:128769"/>
    </ligand>
</feature>
<feature type="binding site" evidence="1">
    <location>
        <position position="201"/>
    </location>
    <ligand>
        <name>(2E)-4-hydroxy-3-methylbut-2-enyl diphosphate</name>
        <dbReference type="ChEBI" id="CHEBI:128753"/>
    </ligand>
</feature>
<feature type="binding site" evidence="1">
    <location>
        <position position="231"/>
    </location>
    <ligand>
        <name>[4Fe-4S] cluster</name>
        <dbReference type="ChEBI" id="CHEBI:49883"/>
    </ligand>
</feature>
<feature type="binding site" evidence="1">
    <location>
        <position position="259"/>
    </location>
    <ligand>
        <name>(2E)-4-hydroxy-3-methylbut-2-enyl diphosphate</name>
        <dbReference type="ChEBI" id="CHEBI:128753"/>
    </ligand>
</feature>
<feature type="binding site" evidence="1">
    <location>
        <position position="259"/>
    </location>
    <ligand>
        <name>dimethylallyl diphosphate</name>
        <dbReference type="ChEBI" id="CHEBI:57623"/>
    </ligand>
</feature>
<feature type="binding site" evidence="1">
    <location>
        <position position="259"/>
    </location>
    <ligand>
        <name>isopentenyl diphosphate</name>
        <dbReference type="ChEBI" id="CHEBI:128769"/>
    </ligand>
</feature>
<feature type="binding site" evidence="1">
    <location>
        <position position="260"/>
    </location>
    <ligand>
        <name>(2E)-4-hydroxy-3-methylbut-2-enyl diphosphate</name>
        <dbReference type="ChEBI" id="CHEBI:128753"/>
    </ligand>
</feature>
<feature type="binding site" evidence="1">
    <location>
        <position position="260"/>
    </location>
    <ligand>
        <name>dimethylallyl diphosphate</name>
        <dbReference type="ChEBI" id="CHEBI:57623"/>
    </ligand>
</feature>
<feature type="binding site" evidence="1">
    <location>
        <position position="260"/>
    </location>
    <ligand>
        <name>isopentenyl diphosphate</name>
        <dbReference type="ChEBI" id="CHEBI:128769"/>
    </ligand>
</feature>
<feature type="binding site" evidence="1">
    <location>
        <position position="261"/>
    </location>
    <ligand>
        <name>(2E)-4-hydroxy-3-methylbut-2-enyl diphosphate</name>
        <dbReference type="ChEBI" id="CHEBI:128753"/>
    </ligand>
</feature>
<feature type="binding site" evidence="1">
    <location>
        <position position="261"/>
    </location>
    <ligand>
        <name>dimethylallyl diphosphate</name>
        <dbReference type="ChEBI" id="CHEBI:57623"/>
    </ligand>
</feature>
<feature type="binding site" evidence="1">
    <location>
        <position position="261"/>
    </location>
    <ligand>
        <name>isopentenyl diphosphate</name>
        <dbReference type="ChEBI" id="CHEBI:128769"/>
    </ligand>
</feature>
<feature type="binding site" evidence="1">
    <location>
        <position position="303"/>
    </location>
    <ligand>
        <name>(2E)-4-hydroxy-3-methylbut-2-enyl diphosphate</name>
        <dbReference type="ChEBI" id="CHEBI:128753"/>
    </ligand>
</feature>
<feature type="binding site" evidence="1">
    <location>
        <position position="303"/>
    </location>
    <ligand>
        <name>dimethylallyl diphosphate</name>
        <dbReference type="ChEBI" id="CHEBI:57623"/>
    </ligand>
</feature>
<feature type="binding site" evidence="1">
    <location>
        <position position="303"/>
    </location>
    <ligand>
        <name>isopentenyl diphosphate</name>
        <dbReference type="ChEBI" id="CHEBI:128769"/>
    </ligand>
</feature>
<evidence type="ECO:0000255" key="1">
    <source>
        <dbReference type="HAMAP-Rule" id="MF_00191"/>
    </source>
</evidence>